<dbReference type="EMBL" id="AL123456">
    <property type="protein sequence ID" value="CCP43367.1"/>
    <property type="molecule type" value="Genomic_DNA"/>
</dbReference>
<dbReference type="PIR" id="G70611">
    <property type="entry name" value="G70611"/>
</dbReference>
<dbReference type="RefSeq" id="NP_215140.1">
    <property type="nucleotide sequence ID" value="NC_000962.3"/>
</dbReference>
<dbReference type="RefSeq" id="WP_003403244.1">
    <property type="nucleotide sequence ID" value="NZ_NVQJ01000033.1"/>
</dbReference>
<dbReference type="PDB" id="3DBO">
    <property type="method" value="X-ray"/>
    <property type="resolution" value="1.76 A"/>
    <property type="chains" value="A=1-86"/>
</dbReference>
<dbReference type="PDBsum" id="3DBO"/>
<dbReference type="SMR" id="P9WF19"/>
<dbReference type="STRING" id="83332.Rv0626"/>
<dbReference type="PaxDb" id="83332-Rv0626"/>
<dbReference type="DNASU" id="887996"/>
<dbReference type="GeneID" id="887996"/>
<dbReference type="KEGG" id="mtu:Rv0626"/>
<dbReference type="KEGG" id="mtv:RVBD_0626"/>
<dbReference type="TubercuList" id="Rv0626"/>
<dbReference type="eggNOG" id="COG4118">
    <property type="taxonomic scope" value="Bacteria"/>
</dbReference>
<dbReference type="InParanoid" id="P9WF19"/>
<dbReference type="OrthoDB" id="557859at2"/>
<dbReference type="PhylomeDB" id="P9WF19"/>
<dbReference type="EvolutionaryTrace" id="P9WF19"/>
<dbReference type="Proteomes" id="UP000001584">
    <property type="component" value="Chromosome"/>
</dbReference>
<dbReference type="GO" id="GO:0015643">
    <property type="term" value="F:toxic substance binding"/>
    <property type="evidence" value="ECO:0000314"/>
    <property type="project" value="MTBBASE"/>
</dbReference>
<dbReference type="GO" id="GO:0097351">
    <property type="term" value="F:toxin sequestering activity"/>
    <property type="evidence" value="ECO:0000318"/>
    <property type="project" value="GO_Central"/>
</dbReference>
<dbReference type="GO" id="GO:0045927">
    <property type="term" value="P:positive regulation of growth"/>
    <property type="evidence" value="ECO:0000314"/>
    <property type="project" value="MTBBASE"/>
</dbReference>
<dbReference type="DisProt" id="DP00889"/>
<dbReference type="FunFam" id="3.40.1620.10:FF:000002">
    <property type="entry name" value="Antitoxin"/>
    <property type="match status" value="1"/>
</dbReference>
<dbReference type="Gene3D" id="3.40.1620.10">
    <property type="entry name" value="YefM-like domain"/>
    <property type="match status" value="1"/>
</dbReference>
<dbReference type="InterPro" id="IPR006442">
    <property type="entry name" value="Antitoxin_Phd/YefM"/>
</dbReference>
<dbReference type="InterPro" id="IPR051416">
    <property type="entry name" value="phD-YefM_TA_antitoxins"/>
</dbReference>
<dbReference type="InterPro" id="IPR036165">
    <property type="entry name" value="YefM-like_sf"/>
</dbReference>
<dbReference type="NCBIfam" id="TIGR01552">
    <property type="entry name" value="phd_fam"/>
    <property type="match status" value="1"/>
</dbReference>
<dbReference type="PANTHER" id="PTHR35377:SF5">
    <property type="entry name" value="ANTITOXIN VAPB46"/>
    <property type="match status" value="1"/>
</dbReference>
<dbReference type="PANTHER" id="PTHR35377">
    <property type="entry name" value="ANTITOXIN VAPB49-RELATED-RELATED"/>
    <property type="match status" value="1"/>
</dbReference>
<dbReference type="Pfam" id="PF02604">
    <property type="entry name" value="PhdYeFM_antitox"/>
    <property type="match status" value="1"/>
</dbReference>
<dbReference type="SUPFAM" id="SSF143120">
    <property type="entry name" value="YefM-like"/>
    <property type="match status" value="1"/>
</dbReference>
<keyword id="KW-0002">3D-structure</keyword>
<keyword id="KW-1185">Reference proteome</keyword>
<keyword id="KW-1277">Toxin-antitoxin system</keyword>
<reference key="1">
    <citation type="journal article" date="1998" name="Nature">
        <title>Deciphering the biology of Mycobacterium tuberculosis from the complete genome sequence.</title>
        <authorList>
            <person name="Cole S.T."/>
            <person name="Brosch R."/>
            <person name="Parkhill J."/>
            <person name="Garnier T."/>
            <person name="Churcher C.M."/>
            <person name="Harris D.E."/>
            <person name="Gordon S.V."/>
            <person name="Eiglmeier K."/>
            <person name="Gas S."/>
            <person name="Barry C.E. III"/>
            <person name="Tekaia F."/>
            <person name="Badcock K."/>
            <person name="Basham D."/>
            <person name="Brown D."/>
            <person name="Chillingworth T."/>
            <person name="Connor R."/>
            <person name="Davies R.M."/>
            <person name="Devlin K."/>
            <person name="Feltwell T."/>
            <person name="Gentles S."/>
            <person name="Hamlin N."/>
            <person name="Holroyd S."/>
            <person name="Hornsby T."/>
            <person name="Jagels K."/>
            <person name="Krogh A."/>
            <person name="McLean J."/>
            <person name="Moule S."/>
            <person name="Murphy L.D."/>
            <person name="Oliver S."/>
            <person name="Osborne J."/>
            <person name="Quail M.A."/>
            <person name="Rajandream M.A."/>
            <person name="Rogers J."/>
            <person name="Rutter S."/>
            <person name="Seeger K."/>
            <person name="Skelton S."/>
            <person name="Squares S."/>
            <person name="Squares R."/>
            <person name="Sulston J.E."/>
            <person name="Taylor K."/>
            <person name="Whitehead S."/>
            <person name="Barrell B.G."/>
        </authorList>
    </citation>
    <scope>NUCLEOTIDE SEQUENCE [LARGE SCALE GENOMIC DNA]</scope>
    <source>
        <strain>ATCC 25618 / H37Rv</strain>
    </source>
</reference>
<reference key="2">
    <citation type="journal article" date="2005" name="Nucleic Acids Res.">
        <title>Toxin-antitoxin loci are highly abundant in free-living but lost from host-associated prokaryotes.</title>
        <authorList>
            <person name="Pandey D.P."/>
            <person name="Gerdes K."/>
        </authorList>
    </citation>
    <scope>POSSIBLE FUNCTION</scope>
    <source>
        <strain>ATCC 25618 / H37Rv</strain>
    </source>
</reference>
<reference key="3">
    <citation type="journal article" date="2011" name="Mol. Cell. Proteomics">
        <title>Proteogenomic analysis of Mycobacterium tuberculosis by high resolution mass spectrometry.</title>
        <authorList>
            <person name="Kelkar D.S."/>
            <person name="Kumar D."/>
            <person name="Kumar P."/>
            <person name="Balakrishnan L."/>
            <person name="Muthusamy B."/>
            <person name="Yadav A.K."/>
            <person name="Shrivastava P."/>
            <person name="Marimuthu A."/>
            <person name="Anand S."/>
            <person name="Sundaram H."/>
            <person name="Kingsbury R."/>
            <person name="Harsha H.C."/>
            <person name="Nair B."/>
            <person name="Prasad T.S."/>
            <person name="Chauhan D.S."/>
            <person name="Katoch K."/>
            <person name="Katoch V.M."/>
            <person name="Kumar P."/>
            <person name="Chaerkady R."/>
            <person name="Ramachandran S."/>
            <person name="Dash D."/>
            <person name="Pandey A."/>
        </authorList>
    </citation>
    <scope>IDENTIFICATION BY MASS SPECTROMETRY [LARGE SCALE ANALYSIS]</scope>
    <source>
        <strain>ATCC 25618 / H37Rv</strain>
    </source>
</reference>
<reference key="4">
    <citation type="journal article" date="2015" name="J. Bacteriol.">
        <title>Structure-function analysis of VapB4 antitoxin identifies critical features of a minimal VapC4 toxin-binding module.</title>
        <authorList>
            <person name="Jin G."/>
            <person name="Pavelka M.S. Jr."/>
            <person name="Butler J.S."/>
        </authorList>
    </citation>
    <scope>SUBSTRATE SPECIFICITY</scope>
    <scope>DOMAIN</scope>
    <source>
        <strain>H37Rv</strain>
    </source>
</reference>
<reference key="5">
    <citation type="journal article" date="2009" name="J. Biol. Chem.">
        <title>Structure and proposed activity of a member of the VapBC family of toxin-antitoxin systems. VapBC-5 from Mycobacterium tuberculosis.</title>
        <authorList>
            <person name="Miallau L."/>
            <person name="Faller M."/>
            <person name="Chiang J."/>
            <person name="Arbing M."/>
            <person name="Guo F."/>
            <person name="Cascio D."/>
            <person name="Eisenberg D."/>
        </authorList>
    </citation>
    <scope>X-RAY CRYSTALLOGRAPHY (1.76 ANGSTROMS) IN COMPLEX WITH VAPC5</scope>
    <scope>SUBUNIT</scope>
    <source>
        <strain>ATCC 25618 / H37Rv</strain>
    </source>
</reference>
<sequence>MSEVASRELRNDTAGVLRRVRAGEDVTITVSGRPVAVLTPVRPRRRRWLSKTEFLSRLRGAQADPGLRNDLAVLAGDTTEDLGPIR</sequence>
<gene>
    <name type="primary">vapB5</name>
    <name type="ordered locus">Rv0626</name>
</gene>
<protein>
    <recommendedName>
        <fullName>Putative antitoxin VapB5</fullName>
    </recommendedName>
</protein>
<accession>P9WF19</accession>
<accession>L0T7A0</accession>
<accession>P96916</accession>
<accession>Q7D9I5</accession>
<comment type="function">
    <text evidence="1">Probable antitoxin component of a type II toxin-antitoxin (TA) system. The cognate toxin is VapC5.</text>
</comment>
<comment type="subunit">
    <text evidence="1">Forms a complex with VapC5.</text>
</comment>
<comment type="domain">
    <text evidence="2">The C-terminal domain (residues 55-86) does not neutralize non-cognate antitoxin VapC4; exchanging the N-terminus (residues 1-54) with VapB4 however allows neutralization of VapC4, while exchanging the C-terminal domain (residues 55-86) does not.</text>
</comment>
<comment type="similarity">
    <text evidence="3">Belongs to the phD/YefM antitoxin family.</text>
</comment>
<proteinExistence type="evidence at protein level"/>
<organism>
    <name type="scientific">Mycobacterium tuberculosis (strain ATCC 25618 / H37Rv)</name>
    <dbReference type="NCBI Taxonomy" id="83332"/>
    <lineage>
        <taxon>Bacteria</taxon>
        <taxon>Bacillati</taxon>
        <taxon>Actinomycetota</taxon>
        <taxon>Actinomycetes</taxon>
        <taxon>Mycobacteriales</taxon>
        <taxon>Mycobacteriaceae</taxon>
        <taxon>Mycobacterium</taxon>
        <taxon>Mycobacterium tuberculosis complex</taxon>
    </lineage>
</organism>
<name>VAPB5_MYCTU</name>
<feature type="chain" id="PRO_0000408046" description="Putative antitoxin VapB5">
    <location>
        <begin position="1"/>
        <end position="86"/>
    </location>
</feature>
<feature type="helix" evidence="4">
    <location>
        <begin position="51"/>
        <end position="58"/>
    </location>
</feature>
<feature type="helix" evidence="4">
    <location>
        <begin position="67"/>
        <end position="75"/>
    </location>
</feature>
<evidence type="ECO:0000269" key="1">
    <source>
    </source>
</evidence>
<evidence type="ECO:0000269" key="2">
    <source>
    </source>
</evidence>
<evidence type="ECO:0000305" key="3"/>
<evidence type="ECO:0007829" key="4">
    <source>
        <dbReference type="PDB" id="3DBO"/>
    </source>
</evidence>